<dbReference type="EC" id="2.7.11.15" evidence="3"/>
<dbReference type="EMBL" id="AF087455">
    <property type="protein sequence ID" value="AAD11419.1"/>
    <property type="molecule type" value="mRNA"/>
</dbReference>
<dbReference type="SMR" id="O97627"/>
<dbReference type="BRENDA" id="2.7.11.15">
    <property type="organism ID" value="9214"/>
</dbReference>
<dbReference type="GO" id="GO:0042995">
    <property type="term" value="C:cell projection"/>
    <property type="evidence" value="ECO:0007669"/>
    <property type="project" value="UniProtKB-KW"/>
</dbReference>
<dbReference type="GO" id="GO:0005737">
    <property type="term" value="C:cytoplasm"/>
    <property type="evidence" value="ECO:0007669"/>
    <property type="project" value="UniProtKB-SubCell"/>
</dbReference>
<dbReference type="GO" id="GO:0005886">
    <property type="term" value="C:plasma membrane"/>
    <property type="evidence" value="ECO:0007669"/>
    <property type="project" value="UniProtKB-SubCell"/>
</dbReference>
<dbReference type="GO" id="GO:0098794">
    <property type="term" value="C:postsynapse"/>
    <property type="evidence" value="ECO:0007669"/>
    <property type="project" value="UniProtKB-SubCell"/>
</dbReference>
<dbReference type="GO" id="GO:0098793">
    <property type="term" value="C:presynapse"/>
    <property type="evidence" value="ECO:0007669"/>
    <property type="project" value="UniProtKB-SubCell"/>
</dbReference>
<dbReference type="GO" id="GO:0005524">
    <property type="term" value="F:ATP binding"/>
    <property type="evidence" value="ECO:0007669"/>
    <property type="project" value="UniProtKB-KW"/>
</dbReference>
<dbReference type="GO" id="GO:0047696">
    <property type="term" value="F:beta-adrenergic receptor kinase activity"/>
    <property type="evidence" value="ECO:0007669"/>
    <property type="project" value="UniProtKB-EC"/>
</dbReference>
<dbReference type="GO" id="GO:0031755">
    <property type="term" value="F:Edg-2 lysophosphatidic acid receptor binding"/>
    <property type="evidence" value="ECO:0000250"/>
    <property type="project" value="UniProtKB"/>
</dbReference>
<dbReference type="GO" id="GO:0004703">
    <property type="term" value="F:G protein-coupled receptor kinase activity"/>
    <property type="evidence" value="ECO:0007669"/>
    <property type="project" value="InterPro"/>
</dbReference>
<dbReference type="GO" id="GO:0002029">
    <property type="term" value="P:desensitization of G protein-coupled receptor signaling pathway"/>
    <property type="evidence" value="ECO:0007669"/>
    <property type="project" value="TreeGrafter"/>
</dbReference>
<dbReference type="GO" id="GO:0007186">
    <property type="term" value="P:G protein-coupled receptor signaling pathway"/>
    <property type="evidence" value="ECO:0007669"/>
    <property type="project" value="TreeGrafter"/>
</dbReference>
<dbReference type="GO" id="GO:1901081">
    <property type="term" value="P:negative regulation of relaxation of smooth muscle"/>
    <property type="evidence" value="ECO:0000250"/>
    <property type="project" value="UniProtKB"/>
</dbReference>
<dbReference type="GO" id="GO:0002026">
    <property type="term" value="P:regulation of the force of heart contraction"/>
    <property type="evidence" value="ECO:0007669"/>
    <property type="project" value="TreeGrafter"/>
</dbReference>
<dbReference type="CDD" id="cd01240">
    <property type="entry name" value="PH_GRK2_subgroup"/>
    <property type="match status" value="1"/>
</dbReference>
<dbReference type="CDD" id="cd08747">
    <property type="entry name" value="RGS_GRK2_GRK3"/>
    <property type="match status" value="1"/>
</dbReference>
<dbReference type="FunFam" id="1.10.510.10:FF:000118">
    <property type="entry name" value="G protein-coupled receptor kinase"/>
    <property type="match status" value="1"/>
</dbReference>
<dbReference type="FunFam" id="2.30.29.30:FF:000084">
    <property type="entry name" value="G protein-coupled receptor kinase"/>
    <property type="match status" value="1"/>
</dbReference>
<dbReference type="FunFam" id="3.30.200.20:FF:000068">
    <property type="entry name" value="G protein-coupled receptor kinase"/>
    <property type="match status" value="1"/>
</dbReference>
<dbReference type="Gene3D" id="3.30.200.20">
    <property type="entry name" value="Phosphorylase Kinase, domain 1"/>
    <property type="match status" value="1"/>
</dbReference>
<dbReference type="Gene3D" id="2.30.29.30">
    <property type="entry name" value="Pleckstrin-homology domain (PH domain)/Phosphotyrosine-binding domain (PTB)"/>
    <property type="match status" value="1"/>
</dbReference>
<dbReference type="Gene3D" id="1.10.167.10">
    <property type="entry name" value="Regulator of G-protein Signalling 4, domain 2"/>
    <property type="match status" value="1"/>
</dbReference>
<dbReference type="Gene3D" id="1.10.510.10">
    <property type="entry name" value="Transferase(Phosphotransferase) domain 1"/>
    <property type="match status" value="1"/>
</dbReference>
<dbReference type="InterPro" id="IPR000961">
    <property type="entry name" value="AGC-kinase_C"/>
</dbReference>
<dbReference type="InterPro" id="IPR000239">
    <property type="entry name" value="GPCR_kinase"/>
</dbReference>
<dbReference type="InterPro" id="IPR011009">
    <property type="entry name" value="Kinase-like_dom_sf"/>
</dbReference>
<dbReference type="InterPro" id="IPR011993">
    <property type="entry name" value="PH-like_dom_sf"/>
</dbReference>
<dbReference type="InterPro" id="IPR001849">
    <property type="entry name" value="PH_domain"/>
</dbReference>
<dbReference type="InterPro" id="IPR000719">
    <property type="entry name" value="Prot_kinase_dom"/>
</dbReference>
<dbReference type="InterPro" id="IPR017441">
    <property type="entry name" value="Protein_kinase_ATP_BS"/>
</dbReference>
<dbReference type="InterPro" id="IPR016137">
    <property type="entry name" value="RGS"/>
</dbReference>
<dbReference type="InterPro" id="IPR036305">
    <property type="entry name" value="RGS_sf"/>
</dbReference>
<dbReference type="InterPro" id="IPR044926">
    <property type="entry name" value="RGS_subdomain_2"/>
</dbReference>
<dbReference type="InterPro" id="IPR008271">
    <property type="entry name" value="Ser/Thr_kinase_AS"/>
</dbReference>
<dbReference type="PANTHER" id="PTHR24355:SF22">
    <property type="entry name" value="BETA-ADRENERGIC RECEPTOR KINASE 1"/>
    <property type="match status" value="1"/>
</dbReference>
<dbReference type="PANTHER" id="PTHR24355">
    <property type="entry name" value="G PROTEIN-COUPLED RECEPTOR KINASE/RIBOSOMAL PROTEIN S6 KINASE"/>
    <property type="match status" value="1"/>
</dbReference>
<dbReference type="Pfam" id="PF00169">
    <property type="entry name" value="PH"/>
    <property type="match status" value="1"/>
</dbReference>
<dbReference type="Pfam" id="PF00069">
    <property type="entry name" value="Pkinase"/>
    <property type="match status" value="1"/>
</dbReference>
<dbReference type="Pfam" id="PF00615">
    <property type="entry name" value="RGS"/>
    <property type="match status" value="1"/>
</dbReference>
<dbReference type="PRINTS" id="PR00717">
    <property type="entry name" value="GPCRKINASE"/>
</dbReference>
<dbReference type="SMART" id="SM00233">
    <property type="entry name" value="PH"/>
    <property type="match status" value="1"/>
</dbReference>
<dbReference type="SMART" id="SM00315">
    <property type="entry name" value="RGS"/>
    <property type="match status" value="1"/>
</dbReference>
<dbReference type="SMART" id="SM00133">
    <property type="entry name" value="S_TK_X"/>
    <property type="match status" value="1"/>
</dbReference>
<dbReference type="SMART" id="SM00220">
    <property type="entry name" value="S_TKc"/>
    <property type="match status" value="1"/>
</dbReference>
<dbReference type="SUPFAM" id="SSF50729">
    <property type="entry name" value="PH domain-like"/>
    <property type="match status" value="1"/>
</dbReference>
<dbReference type="SUPFAM" id="SSF56112">
    <property type="entry name" value="Protein kinase-like (PK-like)"/>
    <property type="match status" value="1"/>
</dbReference>
<dbReference type="SUPFAM" id="SSF48097">
    <property type="entry name" value="Regulator of G-protein signaling, RGS"/>
    <property type="match status" value="1"/>
</dbReference>
<dbReference type="PROSITE" id="PS51285">
    <property type="entry name" value="AGC_KINASE_CTER"/>
    <property type="match status" value="1"/>
</dbReference>
<dbReference type="PROSITE" id="PS50003">
    <property type="entry name" value="PH_DOMAIN"/>
    <property type="match status" value="1"/>
</dbReference>
<dbReference type="PROSITE" id="PS00107">
    <property type="entry name" value="PROTEIN_KINASE_ATP"/>
    <property type="match status" value="1"/>
</dbReference>
<dbReference type="PROSITE" id="PS50011">
    <property type="entry name" value="PROTEIN_KINASE_DOM"/>
    <property type="match status" value="1"/>
</dbReference>
<dbReference type="PROSITE" id="PS00108">
    <property type="entry name" value="PROTEIN_KINASE_ST"/>
    <property type="match status" value="1"/>
</dbReference>
<dbReference type="PROSITE" id="PS50132">
    <property type="entry name" value="RGS"/>
    <property type="match status" value="1"/>
</dbReference>
<gene>
    <name evidence="2" type="primary">GRK2</name>
    <name type="synonym">ADRBK1</name>
</gene>
<comment type="function">
    <text evidence="2 4 11">Specifically phosphorylates the agonist-occupied form of the beta-adrenergic and closely related receptors, probably inducing a desensitization of them (PubMed:9892019). Does not act on HTR1B/5-hydroxytryptamine 1B receptor (PubMed:9892019). Key regulator of LPAR1 signaling (By similarity). Competes with RALA for binding to LPAR1 thus affecting the signaling properties of the receptor (By similarity). Desensitizes LPAR1 and LPAR2 in a phosphorylation-independent manner (By similarity). Inhibits relaxation of airway smooth muscle in response to blue light (By similarity).</text>
</comment>
<comment type="catalytic activity">
    <reaction evidence="3">
        <text>[beta-adrenergic receptor] + ATP = [beta-adrenergic receptor]-phosphate + ADP + H(+)</text>
        <dbReference type="Rhea" id="RHEA:19429"/>
        <dbReference type="Rhea" id="RHEA-COMP:11222"/>
        <dbReference type="Rhea" id="RHEA-COMP:11223"/>
        <dbReference type="ChEBI" id="CHEBI:15378"/>
        <dbReference type="ChEBI" id="CHEBI:30616"/>
        <dbReference type="ChEBI" id="CHEBI:43176"/>
        <dbReference type="ChEBI" id="CHEBI:68546"/>
        <dbReference type="ChEBI" id="CHEBI:456216"/>
        <dbReference type="EC" id="2.7.11.15"/>
    </reaction>
    <physiologicalReaction direction="left-to-right" evidence="3">
        <dbReference type="Rhea" id="RHEA:19430"/>
    </physiologicalReaction>
</comment>
<comment type="activity regulation">
    <text evidence="1">In contrast to other AGC family kinases, the catalytic activity is solely regulated by the binding of substrates and ligands, not by phosphorylation of the kinase domain.</text>
</comment>
<comment type="subunit">
    <text evidence="1 2 3">Interacts with the heterodimer formed by GNB1 and GNG2 (By similarity). Interacts with GIT1 (By similarity). Interacts with, and phosphorylates chemokine-stimulated CCR5 (By similarity). Interacts with ARRB1 (By similarity). Interacts with LPAR1 and LPAR2 (By similarity). Interacts with RALA in response to LPAR1 activation (By similarity). ADRBK1 and RALA mutually inhibit each other's binding to LPAR1 (By similarity). Interacts with ADRB2 (By similarity).</text>
</comment>
<comment type="subcellular location">
    <subcellularLocation>
        <location evidence="3">Cytoplasm</location>
    </subcellularLocation>
    <subcellularLocation>
        <location evidence="1">Cell membrane</location>
    </subcellularLocation>
    <subcellularLocation>
        <location evidence="3">Postsynapse</location>
    </subcellularLocation>
    <subcellularLocation>
        <location evidence="3">Presynapse</location>
    </subcellularLocation>
</comment>
<comment type="domain">
    <text evidence="1">The PH domain binds anionic phospholipids and helps recruiting ADRBK1 from the cytoplasm to plasma membrane close to activated receptors. It mediates binding to G protein beta and gamma subunits, competing with G-alpha subunits and other G-betagamma effectors.</text>
</comment>
<comment type="similarity">
    <text evidence="12">Belongs to the protein kinase superfamily. AGC Ser/Thr protein kinase family. GPRK subfamily.</text>
</comment>
<keyword id="KW-0067">ATP-binding</keyword>
<keyword id="KW-1003">Cell membrane</keyword>
<keyword id="KW-0966">Cell projection</keyword>
<keyword id="KW-0963">Cytoplasm</keyword>
<keyword id="KW-0418">Kinase</keyword>
<keyword id="KW-0472">Membrane</keyword>
<keyword id="KW-0547">Nucleotide-binding</keyword>
<keyword id="KW-0597">Phosphoprotein</keyword>
<keyword id="KW-0723">Serine/threonine-protein kinase</keyword>
<keyword id="KW-0770">Synapse</keyword>
<keyword id="KW-0808">Transferase</keyword>
<reference key="1">
    <citation type="journal article" date="1999" name="Mol. Endocrinol.">
        <title>Receptor selectivity of the cloned opossum G protein-coupled receptor kinase 2 (GRK2) in intact opossum kidney cells: role in desensitization of endogenous alpha2C-adrenergic but not serotonin 1B receptors.</title>
        <authorList>
            <person name="Lembo P.M.C."/>
            <person name="Ghahremani M.H."/>
            <person name="Albert P.R."/>
        </authorList>
    </citation>
    <scope>NUCLEOTIDE SEQUENCE [MRNA]</scope>
    <scope>FUNCTION</scope>
    <scope>MUTAGENESIS OF LYS-220</scope>
    <source>
        <tissue>Kidney</tissue>
    </source>
</reference>
<feature type="chain" id="PRO_0000260315" description="Beta-adrenergic receptor kinase 1">
    <location>
        <begin position="1"/>
        <end position="689"/>
    </location>
</feature>
<feature type="domain" description="RGS" evidence="7">
    <location>
        <begin position="54"/>
        <end position="175"/>
    </location>
</feature>
<feature type="domain" description="Protein kinase" evidence="6">
    <location>
        <begin position="191"/>
        <end position="453"/>
    </location>
</feature>
<feature type="domain" description="AGC-kinase C-terminal" evidence="8">
    <location>
        <begin position="454"/>
        <end position="521"/>
    </location>
</feature>
<feature type="domain" description="PH" evidence="5">
    <location>
        <begin position="558"/>
        <end position="652"/>
    </location>
</feature>
<feature type="region of interest" description="N-terminal">
    <location>
        <begin position="1"/>
        <end position="190"/>
    </location>
</feature>
<feature type="region of interest" description="Disordered" evidence="10">
    <location>
        <begin position="665"/>
        <end position="689"/>
    </location>
</feature>
<feature type="active site" description="Proton acceptor" evidence="6 9">
    <location>
        <position position="317"/>
    </location>
</feature>
<feature type="binding site" evidence="6">
    <location>
        <begin position="197"/>
        <end position="205"/>
    </location>
    <ligand>
        <name>ATP</name>
        <dbReference type="ChEBI" id="CHEBI:30616"/>
    </ligand>
</feature>
<feature type="binding site" evidence="6">
    <location>
        <position position="220"/>
    </location>
    <ligand>
        <name>ATP</name>
        <dbReference type="ChEBI" id="CHEBI:30616"/>
    </ligand>
</feature>
<feature type="site" description="Required for receptor phosphorylation" evidence="2">
    <location>
        <position position="3"/>
    </location>
</feature>
<feature type="site" description="Required for receptor phosphorylation" evidence="2">
    <location>
        <position position="4"/>
    </location>
</feature>
<feature type="site" description="Required for receptor phosphorylation" evidence="2">
    <location>
        <position position="10"/>
    </location>
</feature>
<feature type="modified residue" description="Phosphoserine" evidence="2">
    <location>
        <position position="670"/>
    </location>
</feature>
<feature type="mutagenesis site" description="Loss of activity." evidence="11">
    <original>K</original>
    <variation>R</variation>
    <location>
        <position position="220"/>
    </location>
</feature>
<evidence type="ECO:0000250" key="1">
    <source>
        <dbReference type="UniProtKB" id="P21146"/>
    </source>
</evidence>
<evidence type="ECO:0000250" key="2">
    <source>
        <dbReference type="UniProtKB" id="P25098"/>
    </source>
</evidence>
<evidence type="ECO:0000250" key="3">
    <source>
        <dbReference type="UniProtKB" id="P26817"/>
    </source>
</evidence>
<evidence type="ECO:0000250" key="4">
    <source>
        <dbReference type="UniProtKB" id="Q99MK8"/>
    </source>
</evidence>
<evidence type="ECO:0000255" key="5">
    <source>
        <dbReference type="PROSITE-ProRule" id="PRU00145"/>
    </source>
</evidence>
<evidence type="ECO:0000255" key="6">
    <source>
        <dbReference type="PROSITE-ProRule" id="PRU00159"/>
    </source>
</evidence>
<evidence type="ECO:0000255" key="7">
    <source>
        <dbReference type="PROSITE-ProRule" id="PRU00171"/>
    </source>
</evidence>
<evidence type="ECO:0000255" key="8">
    <source>
        <dbReference type="PROSITE-ProRule" id="PRU00618"/>
    </source>
</evidence>
<evidence type="ECO:0000255" key="9">
    <source>
        <dbReference type="PROSITE-ProRule" id="PRU10027"/>
    </source>
</evidence>
<evidence type="ECO:0000256" key="10">
    <source>
        <dbReference type="SAM" id="MobiDB-lite"/>
    </source>
</evidence>
<evidence type="ECO:0000269" key="11">
    <source>
    </source>
</evidence>
<evidence type="ECO:0000305" key="12"/>
<proteinExistence type="evidence at protein level"/>
<name>ARBK1_DIDVI</name>
<sequence length="689" mass="79783">MADLEAVLADVSYLMAMEKSKATPAARASKKILLPEPSIRSVMQKYLEDRGEVTFEKIFSQKLGYLLFREFCLNHMEEAKPLVEFYDEIKKYEKLDSEEERTVKSREIFDLYIMKELLSCSHLFSKSATEHVQSRLLKKQVPTDLFQPYIEEICQRFRDDVFQKFIESEKFTRFCQWKNVELNIHLTMNDFSVHRIIGRGGFGEVYGCRKADTGKMYAMKCLDKKRIKMKQGETLALNERIMLSLVSTGDCPFIVCMSYAFHTPDKLSFILDLMNGGDLHYHLSQHGVFSESDMRFYAAEIILGLEHMHSRFVVYRDLKPANILLDEFGHVRISDLGLACDFSKKKPHASVGTHGYMAPEVLQKGVAYDSSADWFSLGCMLFKLLRGHSPFRQHKTKDKHEIDRMTLTMAVELPDSFSPELRSLLEGLLQRDVNRSLGCLGRGAQEVKEDPFFKAVDWQMVLLQKYPPPLIPPRGEVNAADAFDIGSFDEEDTKGIKLLDSDQELYRNFPLTISERWQQEVAETVFDTVNSETDRLEARKKAKNKQLGHEDDYALGKDCIMHGYMSKMGNPFLTQWQRRYFYLFPNRLEWRAEGEAPQSLLTMEEIQSVEETQIKDRKCILLKIRGGKQFILQCDSDPELVQWKKELRDVYREAQQLLQRVPKMKNKPRSPVVELSKMPLTQRGSANGL</sequence>
<accession>O97627</accession>
<protein>
    <recommendedName>
        <fullName>Beta-adrenergic receptor kinase 1</fullName>
        <shortName>Beta-ARK-1</shortName>
        <ecNumber evidence="3">2.7.11.15</ecNumber>
    </recommendedName>
    <alternativeName>
        <fullName evidence="2">G-protein coupled receptor kinase 2</fullName>
    </alternativeName>
</protein>
<organism>
    <name type="scientific">Didelphis virginiana</name>
    <name type="common">North American opossum</name>
    <name type="synonym">Didelphis marsupialis virginiana</name>
    <dbReference type="NCBI Taxonomy" id="9267"/>
    <lineage>
        <taxon>Eukaryota</taxon>
        <taxon>Metazoa</taxon>
        <taxon>Chordata</taxon>
        <taxon>Craniata</taxon>
        <taxon>Vertebrata</taxon>
        <taxon>Euteleostomi</taxon>
        <taxon>Mammalia</taxon>
        <taxon>Metatheria</taxon>
        <taxon>Didelphimorphia</taxon>
        <taxon>Didelphidae</taxon>
        <taxon>Didelphis</taxon>
    </lineage>
</organism>